<proteinExistence type="evidence at protein level"/>
<organism>
    <name type="scientific">Rhinoceros unicornis</name>
    <name type="common">Greater Indian rhinoceros</name>
    <dbReference type="NCBI Taxonomy" id="9809"/>
    <lineage>
        <taxon>Eukaryota</taxon>
        <taxon>Metazoa</taxon>
        <taxon>Chordata</taxon>
        <taxon>Craniata</taxon>
        <taxon>Vertebrata</taxon>
        <taxon>Euteleostomi</taxon>
        <taxon>Mammalia</taxon>
        <taxon>Eutheria</taxon>
        <taxon>Laurasiatheria</taxon>
        <taxon>Perissodactyla</taxon>
        <taxon>Rhinocerotidae</taxon>
        <taxon>Rhinoceros</taxon>
    </lineage>
</organism>
<sequence length="146" mass="15857">VDLTAEEKAAVLALWGKVNEDEVGGEALGRLLVVYPWTQRFFDSFGDLSTPAAVLGNAKVKAHGKKVLHSFGDGVHNLDNLKGTYAALSELHCDKLHVDPENFRLLGNVLVVVLAQHFGQEFTPELQAAYQKVVAGVANALAHKYH</sequence>
<gene>
    <name type="primary">HBB</name>
</gene>
<comment type="function">
    <text>Involved in oxygen transport from the lung to the various peripheral tissues.</text>
</comment>
<comment type="subunit">
    <text>Heterotetramer of two alpha chains and two beta chains.</text>
</comment>
<comment type="tissue specificity">
    <text>Red blood cells.</text>
</comment>
<comment type="similarity">
    <text evidence="3">Belongs to the globin family.</text>
</comment>
<name>HBB_RHIUN</name>
<accession>P09907</accession>
<evidence type="ECO:0000250" key="1">
    <source>
        <dbReference type="UniProtKB" id="P02086"/>
    </source>
</evidence>
<evidence type="ECO:0000250" key="2">
    <source>
        <dbReference type="UniProtKB" id="P68871"/>
    </source>
</evidence>
<evidence type="ECO:0000255" key="3">
    <source>
        <dbReference type="PROSITE-ProRule" id="PRU00238"/>
    </source>
</evidence>
<keyword id="KW-0007">Acetylation</keyword>
<keyword id="KW-0903">Direct protein sequencing</keyword>
<keyword id="KW-0349">Heme</keyword>
<keyword id="KW-0408">Iron</keyword>
<keyword id="KW-0479">Metal-binding</keyword>
<keyword id="KW-0561">Oxygen transport</keyword>
<keyword id="KW-0597">Phosphoprotein</keyword>
<keyword id="KW-0702">S-nitrosylation</keyword>
<keyword id="KW-0813">Transport</keyword>
<reference key="1">
    <citation type="journal article" date="1987" name="Biol. Chem. Hoppe-Seyler">
        <title>Molecular basis for ATP/2,3-bisphosphoglycerate control switch-over (poikilotherm/homeotherm) an intermediate amino-acid sequence in the hemoglobin of the great Indian rhinoceros (Rhinoceros unicornis, Perissodactyla).</title>
        <authorList>
            <person name="Abbasi A."/>
            <person name="Weber R.E."/>
            <person name="Braunitzer G."/>
            <person name="Goltenboth R."/>
        </authorList>
    </citation>
    <scope>PROTEIN SEQUENCE</scope>
</reference>
<protein>
    <recommendedName>
        <fullName>Hemoglobin subunit beta</fullName>
    </recommendedName>
    <alternativeName>
        <fullName>Beta-globin</fullName>
    </alternativeName>
    <alternativeName>
        <fullName>Hemoglobin beta chain</fullName>
    </alternativeName>
</protein>
<dbReference type="PIR" id="B26543">
    <property type="entry name" value="B26543"/>
</dbReference>
<dbReference type="SMR" id="P09907"/>
<dbReference type="GO" id="GO:0072562">
    <property type="term" value="C:blood microparticle"/>
    <property type="evidence" value="ECO:0007669"/>
    <property type="project" value="TreeGrafter"/>
</dbReference>
<dbReference type="GO" id="GO:0031838">
    <property type="term" value="C:haptoglobin-hemoglobin complex"/>
    <property type="evidence" value="ECO:0007669"/>
    <property type="project" value="TreeGrafter"/>
</dbReference>
<dbReference type="GO" id="GO:0005833">
    <property type="term" value="C:hemoglobin complex"/>
    <property type="evidence" value="ECO:0007669"/>
    <property type="project" value="InterPro"/>
</dbReference>
<dbReference type="GO" id="GO:0031720">
    <property type="term" value="F:haptoglobin binding"/>
    <property type="evidence" value="ECO:0007669"/>
    <property type="project" value="TreeGrafter"/>
</dbReference>
<dbReference type="GO" id="GO:0020037">
    <property type="term" value="F:heme binding"/>
    <property type="evidence" value="ECO:0007669"/>
    <property type="project" value="InterPro"/>
</dbReference>
<dbReference type="GO" id="GO:0031721">
    <property type="term" value="F:hemoglobin alpha binding"/>
    <property type="evidence" value="ECO:0007669"/>
    <property type="project" value="TreeGrafter"/>
</dbReference>
<dbReference type="GO" id="GO:0046872">
    <property type="term" value="F:metal ion binding"/>
    <property type="evidence" value="ECO:0007669"/>
    <property type="project" value="UniProtKB-KW"/>
</dbReference>
<dbReference type="GO" id="GO:0043177">
    <property type="term" value="F:organic acid binding"/>
    <property type="evidence" value="ECO:0007669"/>
    <property type="project" value="TreeGrafter"/>
</dbReference>
<dbReference type="GO" id="GO:0019825">
    <property type="term" value="F:oxygen binding"/>
    <property type="evidence" value="ECO:0007669"/>
    <property type="project" value="InterPro"/>
</dbReference>
<dbReference type="GO" id="GO:0005344">
    <property type="term" value="F:oxygen carrier activity"/>
    <property type="evidence" value="ECO:0007669"/>
    <property type="project" value="UniProtKB-KW"/>
</dbReference>
<dbReference type="GO" id="GO:0004601">
    <property type="term" value="F:peroxidase activity"/>
    <property type="evidence" value="ECO:0007669"/>
    <property type="project" value="TreeGrafter"/>
</dbReference>
<dbReference type="GO" id="GO:0042744">
    <property type="term" value="P:hydrogen peroxide catabolic process"/>
    <property type="evidence" value="ECO:0007669"/>
    <property type="project" value="TreeGrafter"/>
</dbReference>
<dbReference type="CDD" id="cd08925">
    <property type="entry name" value="Hb-beta-like"/>
    <property type="match status" value="1"/>
</dbReference>
<dbReference type="FunFam" id="1.10.490.10:FF:000001">
    <property type="entry name" value="Hemoglobin subunit beta"/>
    <property type="match status" value="1"/>
</dbReference>
<dbReference type="Gene3D" id="1.10.490.10">
    <property type="entry name" value="Globins"/>
    <property type="match status" value="1"/>
</dbReference>
<dbReference type="InterPro" id="IPR000971">
    <property type="entry name" value="Globin"/>
</dbReference>
<dbReference type="InterPro" id="IPR009050">
    <property type="entry name" value="Globin-like_sf"/>
</dbReference>
<dbReference type="InterPro" id="IPR012292">
    <property type="entry name" value="Globin/Proto"/>
</dbReference>
<dbReference type="InterPro" id="IPR002337">
    <property type="entry name" value="Hemoglobin_b"/>
</dbReference>
<dbReference type="InterPro" id="IPR050056">
    <property type="entry name" value="Hemoglobin_oxygen_transport"/>
</dbReference>
<dbReference type="PANTHER" id="PTHR11442">
    <property type="entry name" value="HEMOGLOBIN FAMILY MEMBER"/>
    <property type="match status" value="1"/>
</dbReference>
<dbReference type="PANTHER" id="PTHR11442:SF42">
    <property type="entry name" value="HEMOGLOBIN SUBUNIT BETA"/>
    <property type="match status" value="1"/>
</dbReference>
<dbReference type="Pfam" id="PF00042">
    <property type="entry name" value="Globin"/>
    <property type="match status" value="1"/>
</dbReference>
<dbReference type="PRINTS" id="PR00814">
    <property type="entry name" value="BETAHAEM"/>
</dbReference>
<dbReference type="SUPFAM" id="SSF46458">
    <property type="entry name" value="Globin-like"/>
    <property type="match status" value="1"/>
</dbReference>
<dbReference type="PROSITE" id="PS01033">
    <property type="entry name" value="GLOBIN"/>
    <property type="match status" value="1"/>
</dbReference>
<feature type="chain" id="PRO_0000053093" description="Hemoglobin subunit beta">
    <location>
        <begin position="1"/>
        <end position="146"/>
    </location>
</feature>
<feature type="domain" description="Globin" evidence="3">
    <location>
        <begin position="2"/>
        <end position="146"/>
    </location>
</feature>
<feature type="binding site" description="distal binding residue">
    <location>
        <position position="63"/>
    </location>
    <ligand>
        <name>heme b</name>
        <dbReference type="ChEBI" id="CHEBI:60344"/>
    </ligand>
    <ligandPart>
        <name>Fe</name>
        <dbReference type="ChEBI" id="CHEBI:18248"/>
    </ligandPart>
</feature>
<feature type="binding site" description="proximal binding residue">
    <location>
        <position position="92"/>
    </location>
    <ligand>
        <name>heme b</name>
        <dbReference type="ChEBI" id="CHEBI:60344"/>
    </ligand>
    <ligandPart>
        <name>Fe</name>
        <dbReference type="ChEBI" id="CHEBI:18248"/>
    </ligandPart>
</feature>
<feature type="modified residue" description="N-acetylvaline" evidence="1">
    <location>
        <position position="1"/>
    </location>
</feature>
<feature type="modified residue" description="Phosphoserine" evidence="2">
    <location>
        <position position="44"/>
    </location>
</feature>
<feature type="modified residue" description="N6-acetyllysine" evidence="2">
    <location>
        <position position="59"/>
    </location>
</feature>
<feature type="modified residue" description="N6-acetyllysine" evidence="2">
    <location>
        <position position="82"/>
    </location>
</feature>
<feature type="modified residue" description="S-nitrosocysteine" evidence="2">
    <location>
        <position position="93"/>
    </location>
</feature>
<feature type="modified residue" description="N6-acetyllysine" evidence="2">
    <location>
        <position position="144"/>
    </location>
</feature>